<evidence type="ECO:0000250" key="1">
    <source>
        <dbReference type="UniProtKB" id="Q44212"/>
    </source>
</evidence>
<evidence type="ECO:0000255" key="2">
    <source>
        <dbReference type="HAMAP-Rule" id="MF_00855"/>
    </source>
</evidence>
<evidence type="ECO:0000256" key="3">
    <source>
        <dbReference type="SAM" id="MobiDB-lite"/>
    </source>
</evidence>
<evidence type="ECO:0000269" key="4">
    <source>
    </source>
</evidence>
<evidence type="ECO:0000303" key="5">
    <source>
    </source>
</evidence>
<evidence type="ECO:0000305" key="6"/>
<evidence type="ECO:0007744" key="7">
    <source>
        <dbReference type="PDB" id="2PY8"/>
    </source>
</evidence>
<evidence type="ECO:0007829" key="8">
    <source>
        <dbReference type="PDB" id="2PY8"/>
    </source>
</evidence>
<reference key="1">
    <citation type="journal article" date="1996" name="DNA Res.">
        <title>Sequence analysis of the genome of the unicellular cyanobacterium Synechocystis sp. strain PCC6803. II. Sequence determination of the entire genome and assignment of potential protein-coding regions.</title>
        <authorList>
            <person name="Kaneko T."/>
            <person name="Sato S."/>
            <person name="Kotani H."/>
            <person name="Tanaka A."/>
            <person name="Asamizu E."/>
            <person name="Nakamura Y."/>
            <person name="Miyajima N."/>
            <person name="Hirosawa M."/>
            <person name="Sugiura M."/>
            <person name="Sasamoto S."/>
            <person name="Kimura T."/>
            <person name="Hosouchi T."/>
            <person name="Matsuno A."/>
            <person name="Muraki A."/>
            <person name="Nakazaki N."/>
            <person name="Naruo K."/>
            <person name="Okumura S."/>
            <person name="Shimpo S."/>
            <person name="Takeuchi C."/>
            <person name="Wada T."/>
            <person name="Watanabe A."/>
            <person name="Yamada M."/>
            <person name="Yasuda M."/>
            <person name="Tabata S."/>
        </authorList>
    </citation>
    <scope>NUCLEOTIDE SEQUENCE [LARGE SCALE GENOMIC DNA]</scope>
    <source>
        <strain>ATCC 27184 / PCC 6803 / Kazusa</strain>
    </source>
</reference>
<reference evidence="7" key="2">
    <citation type="journal article" date="2007" name="Acta Crystallogr. D">
        <title>Structure of the RuBisCO chaperone RbcX from Synechocystis sp. PCC6803.</title>
        <authorList>
            <person name="Tanaka S."/>
            <person name="Sawaya M.R."/>
            <person name="Kerfeld C.A."/>
            <person name="Yeates T.O."/>
        </authorList>
    </citation>
    <scope>X-RAY CRYSTALLOGRAPHY (2.45 ANGSTROMS) OF 3-138</scope>
    <scope>SUBUNIT</scope>
    <source>
        <strain>ATCC 27184 / PCC 6803 / Kazusa</strain>
    </source>
</reference>
<keyword id="KW-0002">3D-structure</keyword>
<keyword id="KW-1283">Bacterial microcompartment</keyword>
<keyword id="KW-0120">Carbon dioxide fixation</keyword>
<keyword id="KW-1282">Carboxysome</keyword>
<keyword id="KW-0143">Chaperone</keyword>
<keyword id="KW-0963">Cytoplasm</keyword>
<keyword id="KW-0602">Photosynthesis</keyword>
<keyword id="KW-1185">Reference proteome</keyword>
<gene>
    <name evidence="2 5" type="primary">rbcX</name>
    <name type="ordered locus">slr0011</name>
</gene>
<dbReference type="EMBL" id="BA000022">
    <property type="protein sequence ID" value="BAA10191.1"/>
    <property type="molecule type" value="Genomic_DNA"/>
</dbReference>
<dbReference type="PIR" id="S76339">
    <property type="entry name" value="S76339"/>
</dbReference>
<dbReference type="PDB" id="2PY8">
    <property type="method" value="X-ray"/>
    <property type="resolution" value="2.45 A"/>
    <property type="chains" value="A/B/C/D=3-138"/>
</dbReference>
<dbReference type="PDBsum" id="2PY8"/>
<dbReference type="SMR" id="Q55670"/>
<dbReference type="IntAct" id="Q55670">
    <property type="interactions" value="13"/>
</dbReference>
<dbReference type="STRING" id="1148.gene:10499688"/>
<dbReference type="PaxDb" id="1148-1001564"/>
<dbReference type="EnsemblBacteria" id="BAA10191">
    <property type="protein sequence ID" value="BAA10191"/>
    <property type="gene ID" value="BAA10191"/>
</dbReference>
<dbReference type="KEGG" id="syn:slr0011"/>
<dbReference type="eggNOG" id="ENOG50315SX">
    <property type="taxonomic scope" value="Bacteria"/>
</dbReference>
<dbReference type="InParanoid" id="Q55670"/>
<dbReference type="EvolutionaryTrace" id="Q55670"/>
<dbReference type="Proteomes" id="UP000001425">
    <property type="component" value="Chromosome"/>
</dbReference>
<dbReference type="GO" id="GO:0031470">
    <property type="term" value="C:carboxysome"/>
    <property type="evidence" value="ECO:0007669"/>
    <property type="project" value="UniProtKB-SubCell"/>
</dbReference>
<dbReference type="GO" id="GO:0005737">
    <property type="term" value="C:cytoplasm"/>
    <property type="evidence" value="ECO:0007669"/>
    <property type="project" value="UniProtKB-SubCell"/>
</dbReference>
<dbReference type="GO" id="GO:0044183">
    <property type="term" value="F:protein folding chaperone"/>
    <property type="evidence" value="ECO:0007669"/>
    <property type="project" value="InterPro"/>
</dbReference>
<dbReference type="GO" id="GO:0015977">
    <property type="term" value="P:carbon fixation"/>
    <property type="evidence" value="ECO:0007669"/>
    <property type="project" value="UniProtKB-UniRule"/>
</dbReference>
<dbReference type="GO" id="GO:0015979">
    <property type="term" value="P:photosynthesis"/>
    <property type="evidence" value="ECO:0007669"/>
    <property type="project" value="UniProtKB-KW"/>
</dbReference>
<dbReference type="GO" id="GO:0110102">
    <property type="term" value="P:ribulose bisphosphate carboxylase complex assembly"/>
    <property type="evidence" value="ECO:0007669"/>
    <property type="project" value="UniProtKB-UniRule"/>
</dbReference>
<dbReference type="Gene3D" id="1.10.1200.210">
    <property type="entry name" value="Chaperonin-like RbcX"/>
    <property type="match status" value="1"/>
</dbReference>
<dbReference type="HAMAP" id="MF_00855">
    <property type="entry name" value="RbcX"/>
    <property type="match status" value="1"/>
</dbReference>
<dbReference type="InterPro" id="IPR038052">
    <property type="entry name" value="Chaperonin_RbcX_sf"/>
</dbReference>
<dbReference type="InterPro" id="IPR003435">
    <property type="entry name" value="Chaperonin_RcbX"/>
</dbReference>
<dbReference type="InterPro" id="IPR046381">
    <property type="entry name" value="RbcX"/>
</dbReference>
<dbReference type="PANTHER" id="PTHR33791">
    <property type="entry name" value="CHAPERONIN-LIKE RBCX PROTEIN 1, CHLOROPLASTIC"/>
    <property type="match status" value="1"/>
</dbReference>
<dbReference type="PANTHER" id="PTHR33791:SF1">
    <property type="entry name" value="RUBISCO CHAPERONE RBCX"/>
    <property type="match status" value="1"/>
</dbReference>
<dbReference type="Pfam" id="PF02341">
    <property type="entry name" value="RbcX"/>
    <property type="match status" value="1"/>
</dbReference>
<dbReference type="SUPFAM" id="SSF158615">
    <property type="entry name" value="RbcX-like"/>
    <property type="match status" value="1"/>
</dbReference>
<organism>
    <name type="scientific">Synechocystis sp. (strain ATCC 27184 / PCC 6803 / Kazusa)</name>
    <dbReference type="NCBI Taxonomy" id="1111708"/>
    <lineage>
        <taxon>Bacteria</taxon>
        <taxon>Bacillati</taxon>
        <taxon>Cyanobacteriota</taxon>
        <taxon>Cyanophyceae</taxon>
        <taxon>Synechococcales</taxon>
        <taxon>Merismopediaceae</taxon>
        <taxon>Synechocystis</taxon>
    </lineage>
</organism>
<feature type="chain" id="PRO_0000451303" description="RuBisCO chaperone RbcX">
    <location>
        <begin position="1"/>
        <end position="138"/>
    </location>
</feature>
<feature type="region of interest" description="Disordered" evidence="3">
    <location>
        <begin position="118"/>
        <end position="138"/>
    </location>
</feature>
<feature type="compositionally biased region" description="Polar residues" evidence="3">
    <location>
        <begin position="122"/>
        <end position="138"/>
    </location>
</feature>
<feature type="helix" evidence="8">
    <location>
        <begin position="5"/>
        <end position="35"/>
    </location>
</feature>
<feature type="helix" evidence="8">
    <location>
        <begin position="37"/>
        <end position="49"/>
    </location>
</feature>
<feature type="helix" evidence="8">
    <location>
        <begin position="55"/>
        <end position="63"/>
    </location>
</feature>
<feature type="helix" evidence="8">
    <location>
        <begin position="67"/>
        <end position="84"/>
    </location>
</feature>
<feature type="helix" evidence="8">
    <location>
        <begin position="85"/>
        <end position="87"/>
    </location>
</feature>
<feature type="helix" evidence="8">
    <location>
        <begin position="88"/>
        <end position="119"/>
    </location>
</feature>
<comment type="function">
    <text evidence="2">An RbcL-specific chaperone. The central cleft of the RbcX homodimer (RbcX2) binds the C-terminus of an RbcL monomer, stabilizing the C-terminus and probably preventing its reassociation with chaperonin GroEL-ES. At the same time the peripheral region of RbcX2 binds a second RbcL monomer, bridging the RbcL homodimers in the correct orientation. The RbcX2(2)-bound RbcL dimers then assemble into the RbcL8 core (RbcL8-(RbcX2)8). RbcS binding triggers the release of RbcX2.</text>
</comment>
<comment type="subunit">
    <text evidence="1 4">Homodimer (PubMed:17881829). Interacts with the exposed C-terminal peptide of RbcL via its central cleft, contacts a second RbcL monomer via its peripheral polar surface (By similarity).</text>
</comment>
<comment type="subcellular location">
    <subcellularLocation>
        <location evidence="2">Carboxysome</location>
    </subcellularLocation>
    <subcellularLocation>
        <location evidence="2">Cytoplasm</location>
    </subcellularLocation>
    <text evidence="2 6">Most protein is cytoplasmic, but some is in the carboxysome. This cyanobacterium makes beta-type carboxysomes (Probable).</text>
</comment>
<comment type="domain">
    <text evidence="2">The homodimer has 2 functional domains, a central cleft essential for production of soluble RbcL in which the RbcL peptide binds, and a polar surface which plays a role in correct RbcL subunit arrangement.</text>
</comment>
<comment type="similarity">
    <text evidence="2">Belongs to the RbcX family.</text>
</comment>
<name>RBCX_SYNY3</name>
<sequence>MFMQTKHIAQATVKVLQSYLTYQAVLRIQSELGETNPPQAIWLNQYLASHSIQNGETFLTELLDENKELVLRILAVREDIAESVLDFLPGMTRNSLAESNIAHRRHLLERLTRTVAEVDNFPSETSNGESNNNDSPPS</sequence>
<protein>
    <recommendedName>
        <fullName evidence="2 5">RuBisCO chaperone RbcX</fullName>
    </recommendedName>
</protein>
<accession>Q55670</accession>
<proteinExistence type="evidence at protein level"/>